<proteinExistence type="inferred from homology"/>
<name>RNH2_OCEIH</name>
<dbReference type="EC" id="3.1.26.4" evidence="1"/>
<dbReference type="EMBL" id="BA000028">
    <property type="protein sequence ID" value="BAC13496.1"/>
    <property type="molecule type" value="Genomic_DNA"/>
</dbReference>
<dbReference type="RefSeq" id="WP_011065940.1">
    <property type="nucleotide sequence ID" value="NC_004193.1"/>
</dbReference>
<dbReference type="SMR" id="Q8EQZ4"/>
<dbReference type="STRING" id="221109.gene:10733780"/>
<dbReference type="KEGG" id="oih:OB1540"/>
<dbReference type="eggNOG" id="COG0164">
    <property type="taxonomic scope" value="Bacteria"/>
</dbReference>
<dbReference type="HOGENOM" id="CLU_036532_2_1_9"/>
<dbReference type="OrthoDB" id="9803420at2"/>
<dbReference type="PhylomeDB" id="Q8EQZ4"/>
<dbReference type="Proteomes" id="UP000000822">
    <property type="component" value="Chromosome"/>
</dbReference>
<dbReference type="GO" id="GO:0005737">
    <property type="term" value="C:cytoplasm"/>
    <property type="evidence" value="ECO:0007669"/>
    <property type="project" value="UniProtKB-SubCell"/>
</dbReference>
<dbReference type="GO" id="GO:0032299">
    <property type="term" value="C:ribonuclease H2 complex"/>
    <property type="evidence" value="ECO:0007669"/>
    <property type="project" value="TreeGrafter"/>
</dbReference>
<dbReference type="GO" id="GO:0030145">
    <property type="term" value="F:manganese ion binding"/>
    <property type="evidence" value="ECO:0007669"/>
    <property type="project" value="UniProtKB-UniRule"/>
</dbReference>
<dbReference type="GO" id="GO:0003723">
    <property type="term" value="F:RNA binding"/>
    <property type="evidence" value="ECO:0007669"/>
    <property type="project" value="InterPro"/>
</dbReference>
<dbReference type="GO" id="GO:0004523">
    <property type="term" value="F:RNA-DNA hybrid ribonuclease activity"/>
    <property type="evidence" value="ECO:0007669"/>
    <property type="project" value="UniProtKB-UniRule"/>
</dbReference>
<dbReference type="GO" id="GO:0043137">
    <property type="term" value="P:DNA replication, removal of RNA primer"/>
    <property type="evidence" value="ECO:0007669"/>
    <property type="project" value="TreeGrafter"/>
</dbReference>
<dbReference type="GO" id="GO:0006298">
    <property type="term" value="P:mismatch repair"/>
    <property type="evidence" value="ECO:0007669"/>
    <property type="project" value="TreeGrafter"/>
</dbReference>
<dbReference type="CDD" id="cd07182">
    <property type="entry name" value="RNase_HII_bacteria_HII_like"/>
    <property type="match status" value="1"/>
</dbReference>
<dbReference type="FunFam" id="3.30.420.10:FF:000006">
    <property type="entry name" value="Ribonuclease HII"/>
    <property type="match status" value="1"/>
</dbReference>
<dbReference type="Gene3D" id="3.30.420.10">
    <property type="entry name" value="Ribonuclease H-like superfamily/Ribonuclease H"/>
    <property type="match status" value="1"/>
</dbReference>
<dbReference type="HAMAP" id="MF_00052_B">
    <property type="entry name" value="RNase_HII_B"/>
    <property type="match status" value="1"/>
</dbReference>
<dbReference type="InterPro" id="IPR022898">
    <property type="entry name" value="RNase_HII"/>
</dbReference>
<dbReference type="InterPro" id="IPR001352">
    <property type="entry name" value="RNase_HII/HIII"/>
</dbReference>
<dbReference type="InterPro" id="IPR024567">
    <property type="entry name" value="RNase_HII/HIII_dom"/>
</dbReference>
<dbReference type="InterPro" id="IPR012337">
    <property type="entry name" value="RNaseH-like_sf"/>
</dbReference>
<dbReference type="InterPro" id="IPR036397">
    <property type="entry name" value="RNaseH_sf"/>
</dbReference>
<dbReference type="NCBIfam" id="NF000594">
    <property type="entry name" value="PRK00015.1-1"/>
    <property type="match status" value="1"/>
</dbReference>
<dbReference type="NCBIfam" id="NF000595">
    <property type="entry name" value="PRK00015.1-3"/>
    <property type="match status" value="1"/>
</dbReference>
<dbReference type="PANTHER" id="PTHR10954">
    <property type="entry name" value="RIBONUCLEASE H2 SUBUNIT A"/>
    <property type="match status" value="1"/>
</dbReference>
<dbReference type="PANTHER" id="PTHR10954:SF18">
    <property type="entry name" value="RIBONUCLEASE HII"/>
    <property type="match status" value="1"/>
</dbReference>
<dbReference type="Pfam" id="PF01351">
    <property type="entry name" value="RNase_HII"/>
    <property type="match status" value="1"/>
</dbReference>
<dbReference type="SUPFAM" id="SSF53098">
    <property type="entry name" value="Ribonuclease H-like"/>
    <property type="match status" value="1"/>
</dbReference>
<dbReference type="PROSITE" id="PS51975">
    <property type="entry name" value="RNASE_H_2"/>
    <property type="match status" value="1"/>
</dbReference>
<accession>Q8EQZ4</accession>
<feature type="chain" id="PRO_0000111597" description="Ribonuclease HII">
    <location>
        <begin position="1"/>
        <end position="261"/>
    </location>
</feature>
<feature type="domain" description="RNase H type-2" evidence="2">
    <location>
        <begin position="71"/>
        <end position="260"/>
    </location>
</feature>
<feature type="binding site" evidence="1">
    <location>
        <position position="77"/>
    </location>
    <ligand>
        <name>a divalent metal cation</name>
        <dbReference type="ChEBI" id="CHEBI:60240"/>
    </ligand>
</feature>
<feature type="binding site" evidence="1">
    <location>
        <position position="78"/>
    </location>
    <ligand>
        <name>a divalent metal cation</name>
        <dbReference type="ChEBI" id="CHEBI:60240"/>
    </ligand>
</feature>
<feature type="binding site" evidence="1">
    <location>
        <position position="169"/>
    </location>
    <ligand>
        <name>a divalent metal cation</name>
        <dbReference type="ChEBI" id="CHEBI:60240"/>
    </ligand>
</feature>
<protein>
    <recommendedName>
        <fullName evidence="1">Ribonuclease HII</fullName>
        <shortName evidence="1">RNase HII</shortName>
        <ecNumber evidence="1">3.1.26.4</ecNumber>
    </recommendedName>
</protein>
<keyword id="KW-0963">Cytoplasm</keyword>
<keyword id="KW-0255">Endonuclease</keyword>
<keyword id="KW-0378">Hydrolase</keyword>
<keyword id="KW-0464">Manganese</keyword>
<keyword id="KW-0479">Metal-binding</keyword>
<keyword id="KW-0540">Nuclease</keyword>
<keyword id="KW-1185">Reference proteome</keyword>
<reference key="1">
    <citation type="journal article" date="2002" name="Nucleic Acids Res.">
        <title>Genome sequence of Oceanobacillus iheyensis isolated from the Iheya Ridge and its unexpected adaptive capabilities to extreme environments.</title>
        <authorList>
            <person name="Takami H."/>
            <person name="Takaki Y."/>
            <person name="Uchiyama I."/>
        </authorList>
    </citation>
    <scope>NUCLEOTIDE SEQUENCE [LARGE SCALE GENOMIC DNA]</scope>
    <source>
        <strain>DSM 14371 / CIP 107618 / JCM 11309 / KCTC 3954 / HTE831</strain>
    </source>
</reference>
<sequence>MKPASIASIKSQLTNGELTQKQIEELYKDSRKGVQAILKRHEKQQEKQALLKQAFIKMNTYEKEAYRNGNHYIAGVDEVGRGPLAGPVVAAAVILPKDFQLLGINDSKKLSEVQRNEFSHYIKQHAIAYQISFIDNTIIDKINIYEASKQAMKEAISGLQPYPDHALIDAVPLEGLNCTYEAIIKGDAESVHIAAASVLAKVARDDWMKELHEKYPLYGFNSNMGYGTKEHLQAIETYGVTPYHRYSFAPLHKYRHNTLLN</sequence>
<organism>
    <name type="scientific">Oceanobacillus iheyensis (strain DSM 14371 / CIP 107618 / JCM 11309 / KCTC 3954 / HTE831)</name>
    <dbReference type="NCBI Taxonomy" id="221109"/>
    <lineage>
        <taxon>Bacteria</taxon>
        <taxon>Bacillati</taxon>
        <taxon>Bacillota</taxon>
        <taxon>Bacilli</taxon>
        <taxon>Bacillales</taxon>
        <taxon>Bacillaceae</taxon>
        <taxon>Oceanobacillus</taxon>
    </lineage>
</organism>
<evidence type="ECO:0000255" key="1">
    <source>
        <dbReference type="HAMAP-Rule" id="MF_00052"/>
    </source>
</evidence>
<evidence type="ECO:0000255" key="2">
    <source>
        <dbReference type="PROSITE-ProRule" id="PRU01319"/>
    </source>
</evidence>
<gene>
    <name evidence="1" type="primary">rnhB</name>
    <name type="synonym">rnh</name>
    <name type="ordered locus">OB1540</name>
</gene>
<comment type="function">
    <text evidence="1">Endonuclease that specifically degrades the RNA of RNA-DNA hybrids.</text>
</comment>
<comment type="catalytic activity">
    <reaction evidence="1">
        <text>Endonucleolytic cleavage to 5'-phosphomonoester.</text>
        <dbReference type="EC" id="3.1.26.4"/>
    </reaction>
</comment>
<comment type="cofactor">
    <cofactor evidence="1">
        <name>Mn(2+)</name>
        <dbReference type="ChEBI" id="CHEBI:29035"/>
    </cofactor>
    <cofactor evidence="1">
        <name>Mg(2+)</name>
        <dbReference type="ChEBI" id="CHEBI:18420"/>
    </cofactor>
    <text evidence="1">Manganese or magnesium. Binds 1 divalent metal ion per monomer in the absence of substrate. May bind a second metal ion after substrate binding.</text>
</comment>
<comment type="subcellular location">
    <subcellularLocation>
        <location evidence="1">Cytoplasm</location>
    </subcellularLocation>
</comment>
<comment type="similarity">
    <text evidence="1">Belongs to the RNase HII family.</text>
</comment>